<name>Y4236_MYCA1</name>
<sequence length="304" mass="32376">MARTDDDTWDLATSVGATATMVAAGRARATRDGLIDDPFAEPLVRAVGVDFFTRWAAGELDAADVDVPGAAWGMQRMTDMITARTRYIDAFFAEAGAAGIRQVVILASGLDARAYRLPWPAGTTVFEIDQPRVLEFKAATIAQLGAEPTAPVRAVAVDLRHDWPSALRQAGFDVGRPAAWAAEGLLGFLPPQAQDRLLDNVTALSADGSQLVAEVFANTGASGDALNAAGEKWRRHGLDVALDDLGFPGERNDPASYLQQLGWQPVRTPLNQMLANNGLPLQSTEPGAPFAQNYYCTAVLNKAG</sequence>
<evidence type="ECO:0000250" key="1"/>
<evidence type="ECO:0000305" key="2"/>
<keyword id="KW-0489">Methyltransferase</keyword>
<keyword id="KW-0949">S-adenosyl-L-methionine</keyword>
<keyword id="KW-0808">Transferase</keyword>
<accession>A0QKD9</accession>
<proteinExistence type="inferred from homology"/>
<protein>
    <recommendedName>
        <fullName>Putative S-adenosyl-L-methionine-dependent methyltransferase MAV_4236</fullName>
        <ecNumber>2.1.1.-</ecNumber>
    </recommendedName>
</protein>
<comment type="function">
    <text evidence="1">Exhibits S-adenosyl-L-methionine-dependent methyltransferase activity.</text>
</comment>
<comment type="similarity">
    <text evidence="2">Belongs to the UPF0677 family.</text>
</comment>
<reference key="1">
    <citation type="submission" date="2006-10" db="EMBL/GenBank/DDBJ databases">
        <authorList>
            <person name="Fleischmann R.D."/>
            <person name="Dodson R.J."/>
            <person name="Haft D.H."/>
            <person name="Merkel J.S."/>
            <person name="Nelson W.C."/>
            <person name="Fraser C.M."/>
        </authorList>
    </citation>
    <scope>NUCLEOTIDE SEQUENCE [LARGE SCALE GENOMIC DNA]</scope>
    <source>
        <strain>104</strain>
    </source>
</reference>
<dbReference type="EC" id="2.1.1.-"/>
<dbReference type="EMBL" id="CP000479">
    <property type="protein sequence ID" value="ABK64486.1"/>
    <property type="molecule type" value="Genomic_DNA"/>
</dbReference>
<dbReference type="RefSeq" id="WP_009978767.1">
    <property type="nucleotide sequence ID" value="NC_008595.1"/>
</dbReference>
<dbReference type="SMR" id="A0QKD9"/>
<dbReference type="KEGG" id="mav:MAV_4236"/>
<dbReference type="HOGENOM" id="CLU_056160_2_1_11"/>
<dbReference type="Proteomes" id="UP000001574">
    <property type="component" value="Chromosome"/>
</dbReference>
<dbReference type="GO" id="GO:0008168">
    <property type="term" value="F:methyltransferase activity"/>
    <property type="evidence" value="ECO:0007669"/>
    <property type="project" value="UniProtKB-KW"/>
</dbReference>
<dbReference type="GO" id="GO:0032259">
    <property type="term" value="P:methylation"/>
    <property type="evidence" value="ECO:0007669"/>
    <property type="project" value="UniProtKB-KW"/>
</dbReference>
<dbReference type="Gene3D" id="3.40.50.150">
    <property type="entry name" value="Vaccinia Virus protein VP39"/>
    <property type="match status" value="1"/>
</dbReference>
<dbReference type="InterPro" id="IPR007213">
    <property type="entry name" value="Ppm1/Ppm2/Tcmp"/>
</dbReference>
<dbReference type="InterPro" id="IPR029063">
    <property type="entry name" value="SAM-dependent_MTases_sf"/>
</dbReference>
<dbReference type="InterPro" id="IPR011610">
    <property type="entry name" value="SAM_mthyl_Trfase_ML2640-like"/>
</dbReference>
<dbReference type="NCBIfam" id="TIGR00027">
    <property type="entry name" value="mthyl_TIGR00027"/>
    <property type="match status" value="1"/>
</dbReference>
<dbReference type="PANTHER" id="PTHR43619">
    <property type="entry name" value="S-ADENOSYL-L-METHIONINE-DEPENDENT METHYLTRANSFERASE YKTD-RELATED"/>
    <property type="match status" value="1"/>
</dbReference>
<dbReference type="PANTHER" id="PTHR43619:SF2">
    <property type="entry name" value="S-ADENOSYL-L-METHIONINE-DEPENDENT METHYLTRANSFERASES SUPERFAMILY PROTEIN"/>
    <property type="match status" value="1"/>
</dbReference>
<dbReference type="Pfam" id="PF04072">
    <property type="entry name" value="LCM"/>
    <property type="match status" value="1"/>
</dbReference>
<dbReference type="SUPFAM" id="SSF53335">
    <property type="entry name" value="S-adenosyl-L-methionine-dependent methyltransferases"/>
    <property type="match status" value="1"/>
</dbReference>
<gene>
    <name type="ordered locus">MAV_4236</name>
</gene>
<organism>
    <name type="scientific">Mycobacterium avium (strain 104)</name>
    <dbReference type="NCBI Taxonomy" id="243243"/>
    <lineage>
        <taxon>Bacteria</taxon>
        <taxon>Bacillati</taxon>
        <taxon>Actinomycetota</taxon>
        <taxon>Actinomycetes</taxon>
        <taxon>Mycobacteriales</taxon>
        <taxon>Mycobacteriaceae</taxon>
        <taxon>Mycobacterium</taxon>
        <taxon>Mycobacterium avium complex (MAC)</taxon>
    </lineage>
</organism>
<feature type="chain" id="PRO_0000361106" description="Putative S-adenosyl-L-methionine-dependent methyltransferase MAV_4236">
    <location>
        <begin position="1"/>
        <end position="304"/>
    </location>
</feature>
<feature type="binding site" evidence="1">
    <location>
        <position position="129"/>
    </location>
    <ligand>
        <name>S-adenosyl-L-methionine</name>
        <dbReference type="ChEBI" id="CHEBI:59789"/>
    </ligand>
</feature>
<feature type="binding site" evidence="1">
    <location>
        <begin position="158"/>
        <end position="159"/>
    </location>
    <ligand>
        <name>S-adenosyl-L-methionine</name>
        <dbReference type="ChEBI" id="CHEBI:59789"/>
    </ligand>
</feature>